<comment type="function">
    <text evidence="1">Plays a major role in the induction and maintenance of cellular transformation. E6 associates with host UBE3A/E6-AP ubiquitin-protein ligase and modulates its activity. Sequesters tumor suppressor TP53 in the host cytoplasm and modulates its activity by interacting with host EP300 that results in the reduction of TP53 acetylation and activation. In turn, apoptosis induced by DNA damage is inhibited. E6 also protects host keratinocytes from apoptosis by mediating the degradation of host BAK1. May also inhibit host immune response.</text>
</comment>
<comment type="subunit">
    <text evidence="1 2">Forms homodimers. Interacts with ubiquitin-protein ligase UBE3A/E6-AP; this interaction stimulates UBE3A ubiquitin activity. Interacts with host TP53 and EP300; this interaction inhibits TP53 activity. Interacts with human zyxin.</text>
</comment>
<comment type="interaction">
    <interactant intactId="EBI-7069993">
        <id>P06462</id>
    </interactant>
    <interactant intactId="EBI-355924">
        <id>P33993</id>
        <label>MCM7</label>
    </interactant>
    <organismsDiffer>true</organismsDiffer>
    <experiments>2</experiments>
</comment>
<comment type="interaction">
    <interactant intactId="EBI-7069993">
        <id>P06462</id>
    </interactant>
    <interactant intactId="EBI-954357">
        <id>Q05086</id>
        <label>UBE3A</label>
    </interactant>
    <organismsDiffer>true</organismsDiffer>
    <experiments>2</experiments>
</comment>
<comment type="subcellular location">
    <subcellularLocation>
        <location evidence="1">Host cytoplasm</location>
    </subcellularLocation>
    <subcellularLocation>
        <location evidence="1">Host nucleus</location>
    </subcellularLocation>
</comment>
<comment type="miscellaneous">
    <text evidence="1">Belongs to the low risk human alphapapillomavirus family. The cancer-causing human papillomavirus E6 protein has a unique carboxy terminal PDZ domain containing substrate but low risk E6s do not possess this domain.</text>
</comment>
<comment type="similarity">
    <text evidence="3">Belongs to the papillomaviridae E6 protein family.</text>
</comment>
<keyword id="KW-0010">Activator</keyword>
<keyword id="KW-0238">DNA-binding</keyword>
<keyword id="KW-0244">Early protein</keyword>
<keyword id="KW-1035">Host cytoplasm</keyword>
<keyword id="KW-1048">Host nucleus</keyword>
<keyword id="KW-0945">Host-virus interaction</keyword>
<keyword id="KW-1090">Inhibition of host innate immune response by virus</keyword>
<keyword id="KW-0479">Metal-binding</keyword>
<keyword id="KW-1119">Modulation of host cell apoptosis by virus</keyword>
<keyword id="KW-0804">Transcription</keyword>
<keyword id="KW-0805">Transcription regulation</keyword>
<keyword id="KW-0899">Viral immunoevasion</keyword>
<keyword id="KW-0862">Zinc</keyword>
<keyword id="KW-0863">Zinc-finger</keyword>
<reference key="1">
    <citation type="journal article" date="1983" name="EMBO J.">
        <title>DNA sequence and genome organization of genital human papillomavirus type 6b.</title>
        <authorList>
            <person name="Schwarz E."/>
            <person name="Durst M."/>
            <person name="Demankowski C."/>
            <person name="Lattermann O."/>
            <person name="Zech R."/>
            <person name="Wolfsperger E."/>
            <person name="Suhai S."/>
            <person name="zur Hausen H."/>
        </authorList>
    </citation>
    <scope>NUCLEOTIDE SEQUENCE [GENOMIC DNA]</scope>
</reference>
<reference key="2">
    <citation type="journal article" date="2001" name="J. Virol.">
        <title>Interaction of zyxin, a focal adhesion protein, with the E6 protein from human papillomavirus type 6 results in its nuclear translocation.</title>
        <authorList>
            <person name="Degenhardt Y.Y."/>
            <person name="Silverstein S."/>
        </authorList>
    </citation>
    <scope>INTERACTION WITH ZYXIN</scope>
</reference>
<protein>
    <recommendedName>
        <fullName evidence="1">Protein E6</fullName>
    </recommendedName>
</protein>
<name>VE6_HPV6B</name>
<organism>
    <name type="scientific">Human papillomavirus type 6b</name>
    <dbReference type="NCBI Taxonomy" id="10600"/>
    <lineage>
        <taxon>Viruses</taxon>
        <taxon>Monodnaviria</taxon>
        <taxon>Shotokuvirae</taxon>
        <taxon>Cossaviricota</taxon>
        <taxon>Papovaviricetes</taxon>
        <taxon>Zurhausenvirales</taxon>
        <taxon>Papillomaviridae</taxon>
        <taxon>Firstpapillomavirinae</taxon>
        <taxon>Alphapapillomavirus</taxon>
        <taxon>Alphapapillomavirus 10</taxon>
    </lineage>
</organism>
<gene>
    <name evidence="1" type="primary">E6</name>
</gene>
<evidence type="ECO:0000255" key="1">
    <source>
        <dbReference type="HAMAP-Rule" id="MF_04006"/>
    </source>
</evidence>
<evidence type="ECO:0000269" key="2">
    <source>
    </source>
</evidence>
<evidence type="ECO:0000305" key="3"/>
<dbReference type="EMBL" id="X00203">
    <property type="protein sequence ID" value="CAA25018.1"/>
    <property type="molecule type" value="Genomic_DNA"/>
</dbReference>
<dbReference type="PIR" id="E20558">
    <property type="entry name" value="W6WL6"/>
</dbReference>
<dbReference type="RefSeq" id="NP_040296.1">
    <property type="nucleotide sequence ID" value="NC_001355.1"/>
</dbReference>
<dbReference type="SMR" id="P06462"/>
<dbReference type="BioGRID" id="3509162">
    <property type="interactions" value="48"/>
</dbReference>
<dbReference type="IntAct" id="P06462">
    <property type="interactions" value="7"/>
</dbReference>
<dbReference type="MINT" id="P06462"/>
<dbReference type="DNASU" id="1489368"/>
<dbReference type="GeneID" id="1489368"/>
<dbReference type="KEGG" id="vg:1489368"/>
<dbReference type="OrthoDB" id="27353at10239"/>
<dbReference type="Proteomes" id="UP000007676">
    <property type="component" value="Genome"/>
</dbReference>
<dbReference type="GO" id="GO:0030430">
    <property type="term" value="C:host cell cytoplasm"/>
    <property type="evidence" value="ECO:0007669"/>
    <property type="project" value="UniProtKB-SubCell"/>
</dbReference>
<dbReference type="GO" id="GO:0042025">
    <property type="term" value="C:host cell nucleus"/>
    <property type="evidence" value="ECO:0007669"/>
    <property type="project" value="UniProtKB-SubCell"/>
</dbReference>
<dbReference type="GO" id="GO:0003677">
    <property type="term" value="F:DNA binding"/>
    <property type="evidence" value="ECO:0007669"/>
    <property type="project" value="UniProtKB-UniRule"/>
</dbReference>
<dbReference type="GO" id="GO:0008270">
    <property type="term" value="F:zinc ion binding"/>
    <property type="evidence" value="ECO:0007669"/>
    <property type="project" value="UniProtKB-KW"/>
</dbReference>
<dbReference type="GO" id="GO:0006351">
    <property type="term" value="P:DNA-templated transcription"/>
    <property type="evidence" value="ECO:0007669"/>
    <property type="project" value="UniProtKB-UniRule"/>
</dbReference>
<dbReference type="GO" id="GO:0006355">
    <property type="term" value="P:regulation of DNA-templated transcription"/>
    <property type="evidence" value="ECO:0007669"/>
    <property type="project" value="UniProtKB-UniRule"/>
</dbReference>
<dbReference type="GO" id="GO:0052150">
    <property type="term" value="P:symbiont-mediated perturbation of host apoptosis"/>
    <property type="evidence" value="ECO:0007669"/>
    <property type="project" value="UniProtKB-KW"/>
</dbReference>
<dbReference type="GO" id="GO:0039648">
    <property type="term" value="P:symbiont-mediated perturbation of host ubiquitin-like protein modification"/>
    <property type="evidence" value="ECO:0007669"/>
    <property type="project" value="UniProtKB-UniRule"/>
</dbReference>
<dbReference type="GO" id="GO:0052170">
    <property type="term" value="P:symbiont-mediated suppression of host innate immune response"/>
    <property type="evidence" value="ECO:0007669"/>
    <property type="project" value="UniProtKB-KW"/>
</dbReference>
<dbReference type="GO" id="GO:0039502">
    <property type="term" value="P:symbiont-mediated suppression of host type I interferon-mediated signaling pathway"/>
    <property type="evidence" value="ECO:0007669"/>
    <property type="project" value="UniProtKB-UniRule"/>
</dbReference>
<dbReference type="Gene3D" id="3.30.240.40">
    <property type="entry name" value="E6 early regulatory protein"/>
    <property type="match status" value="2"/>
</dbReference>
<dbReference type="HAMAP" id="MF_04006">
    <property type="entry name" value="HPV_E6"/>
    <property type="match status" value="1"/>
</dbReference>
<dbReference type="InterPro" id="IPR001334">
    <property type="entry name" value="E6"/>
</dbReference>
<dbReference type="InterPro" id="IPR038575">
    <property type="entry name" value="E6_sf"/>
</dbReference>
<dbReference type="Pfam" id="PF00518">
    <property type="entry name" value="E6"/>
    <property type="match status" value="1"/>
</dbReference>
<dbReference type="SUPFAM" id="SSF161229">
    <property type="entry name" value="E6 C-terminal domain-like"/>
    <property type="match status" value="2"/>
</dbReference>
<accession>P06462</accession>
<organismHost>
    <name type="scientific">Homo sapiens</name>
    <name type="common">Human</name>
    <dbReference type="NCBI Taxonomy" id="9606"/>
</organismHost>
<sequence length="150" mass="17299">MESANASTSATTIDQLCKTFNLSMHTLQINCVFCKNALTTAEIYSYAYKHLKVLFRGGYPYAACACCLEFHGKINQYRHFDYAGYATTVEEETKQDILDVLIRCYLCHKPLCEVEKVKHILTKARFIKLNCTWKGRCLHCWTTCMEDMLP</sequence>
<feature type="chain" id="PRO_0000133326" description="Protein E6">
    <location>
        <begin position="1"/>
        <end position="150"/>
    </location>
</feature>
<feature type="zinc finger region" evidence="1">
    <location>
        <begin position="31"/>
        <end position="67"/>
    </location>
</feature>
<feature type="zinc finger region" evidence="1">
    <location>
        <begin position="104"/>
        <end position="140"/>
    </location>
</feature>
<proteinExistence type="evidence at protein level"/>